<evidence type="ECO:0000255" key="1">
    <source>
        <dbReference type="HAMAP-Rule" id="MF_00300"/>
    </source>
</evidence>
<sequence>MAGNSIGQLFRVTTFGESHGIALGCIVDGVPPNMALSEADIQPDLDRRKPGTSRYTTARREADEIQILSGVFEGKTTGTSIGLIIKNADQRSKDYGDIMDKFRPGHADYTYQQKYGIRDYRGGGRSSARETAMRVAAGAIAKKYLRERFGIEIRGYLSQIGEVKIDPQTVADVTKINWQQVADNPFFCPDKSAVEKFDELIRKLKKEGNSIGAKLTVVAENVPVGLGEPVFDRLDAELAHALMGINAVKAVEIGDGFDVVAQKGTEHRDEMTPAGFLSNHAGGILGGISNGQPIIATIALKPTSSITIPGRTVDINNKPVELITKGRHDPCVGIRAVPIAEAMVAIILLDHLLRFKAQCK</sequence>
<gene>
    <name evidence="1" type="primary">aroC</name>
    <name type="ordered locus">Asuc_0966</name>
</gene>
<comment type="function">
    <text evidence="1">Catalyzes the anti-1,4-elimination of the C-3 phosphate and the C-6 proR hydrogen from 5-enolpyruvylshikimate-3-phosphate (EPSP) to yield chorismate, which is the branch point compound that serves as the starting substrate for the three terminal pathways of aromatic amino acid biosynthesis. This reaction introduces a second double bond into the aromatic ring system.</text>
</comment>
<comment type="catalytic activity">
    <reaction evidence="1">
        <text>5-O-(1-carboxyvinyl)-3-phosphoshikimate = chorismate + phosphate</text>
        <dbReference type="Rhea" id="RHEA:21020"/>
        <dbReference type="ChEBI" id="CHEBI:29748"/>
        <dbReference type="ChEBI" id="CHEBI:43474"/>
        <dbReference type="ChEBI" id="CHEBI:57701"/>
        <dbReference type="EC" id="4.2.3.5"/>
    </reaction>
</comment>
<comment type="cofactor">
    <cofactor evidence="1">
        <name>FMNH2</name>
        <dbReference type="ChEBI" id="CHEBI:57618"/>
    </cofactor>
    <text evidence="1">Reduced FMN (FMNH(2)).</text>
</comment>
<comment type="pathway">
    <text evidence="1">Metabolic intermediate biosynthesis; chorismate biosynthesis; chorismate from D-erythrose 4-phosphate and phosphoenolpyruvate: step 7/7.</text>
</comment>
<comment type="subunit">
    <text evidence="1">Homotetramer.</text>
</comment>
<comment type="similarity">
    <text evidence="1">Belongs to the chorismate synthase family.</text>
</comment>
<feature type="chain" id="PRO_1000071964" description="Chorismate synthase">
    <location>
        <begin position="1"/>
        <end position="360"/>
    </location>
</feature>
<feature type="binding site" evidence="1">
    <location>
        <position position="48"/>
    </location>
    <ligand>
        <name>NADP(+)</name>
        <dbReference type="ChEBI" id="CHEBI:58349"/>
    </ligand>
</feature>
<feature type="binding site" evidence="1">
    <location>
        <position position="54"/>
    </location>
    <ligand>
        <name>NADP(+)</name>
        <dbReference type="ChEBI" id="CHEBI:58349"/>
    </ligand>
</feature>
<feature type="binding site" evidence="1">
    <location>
        <begin position="125"/>
        <end position="127"/>
    </location>
    <ligand>
        <name>FMN</name>
        <dbReference type="ChEBI" id="CHEBI:58210"/>
    </ligand>
</feature>
<feature type="binding site" evidence="1">
    <location>
        <begin position="246"/>
        <end position="247"/>
    </location>
    <ligand>
        <name>FMN</name>
        <dbReference type="ChEBI" id="CHEBI:58210"/>
    </ligand>
</feature>
<feature type="binding site" evidence="1">
    <location>
        <position position="286"/>
    </location>
    <ligand>
        <name>FMN</name>
        <dbReference type="ChEBI" id="CHEBI:58210"/>
    </ligand>
</feature>
<feature type="binding site" evidence="1">
    <location>
        <begin position="301"/>
        <end position="305"/>
    </location>
    <ligand>
        <name>FMN</name>
        <dbReference type="ChEBI" id="CHEBI:58210"/>
    </ligand>
</feature>
<feature type="binding site" evidence="1">
    <location>
        <position position="327"/>
    </location>
    <ligand>
        <name>FMN</name>
        <dbReference type="ChEBI" id="CHEBI:58210"/>
    </ligand>
</feature>
<dbReference type="EC" id="4.2.3.5" evidence="1"/>
<dbReference type="EMBL" id="CP000746">
    <property type="protein sequence ID" value="ABR74334.1"/>
    <property type="molecule type" value="Genomic_DNA"/>
</dbReference>
<dbReference type="RefSeq" id="WP_012072711.1">
    <property type="nucleotide sequence ID" value="NC_009655.1"/>
</dbReference>
<dbReference type="SMR" id="A6VMY7"/>
<dbReference type="STRING" id="339671.Asuc_0966"/>
<dbReference type="KEGG" id="asu:Asuc_0966"/>
<dbReference type="eggNOG" id="COG0082">
    <property type="taxonomic scope" value="Bacteria"/>
</dbReference>
<dbReference type="HOGENOM" id="CLU_034547_0_2_6"/>
<dbReference type="OrthoDB" id="9771806at2"/>
<dbReference type="UniPathway" id="UPA00053">
    <property type="reaction ID" value="UER00090"/>
</dbReference>
<dbReference type="Proteomes" id="UP000001114">
    <property type="component" value="Chromosome"/>
</dbReference>
<dbReference type="GO" id="GO:0005829">
    <property type="term" value="C:cytosol"/>
    <property type="evidence" value="ECO:0007669"/>
    <property type="project" value="TreeGrafter"/>
</dbReference>
<dbReference type="GO" id="GO:0004107">
    <property type="term" value="F:chorismate synthase activity"/>
    <property type="evidence" value="ECO:0007669"/>
    <property type="project" value="UniProtKB-UniRule"/>
</dbReference>
<dbReference type="GO" id="GO:0010181">
    <property type="term" value="F:FMN binding"/>
    <property type="evidence" value="ECO:0007669"/>
    <property type="project" value="TreeGrafter"/>
</dbReference>
<dbReference type="GO" id="GO:0008652">
    <property type="term" value="P:amino acid biosynthetic process"/>
    <property type="evidence" value="ECO:0007669"/>
    <property type="project" value="UniProtKB-KW"/>
</dbReference>
<dbReference type="GO" id="GO:0009073">
    <property type="term" value="P:aromatic amino acid family biosynthetic process"/>
    <property type="evidence" value="ECO:0007669"/>
    <property type="project" value="UniProtKB-KW"/>
</dbReference>
<dbReference type="GO" id="GO:0009423">
    <property type="term" value="P:chorismate biosynthetic process"/>
    <property type="evidence" value="ECO:0007669"/>
    <property type="project" value="UniProtKB-UniRule"/>
</dbReference>
<dbReference type="CDD" id="cd07304">
    <property type="entry name" value="Chorismate_synthase"/>
    <property type="match status" value="1"/>
</dbReference>
<dbReference type="FunFam" id="3.60.150.10:FF:000001">
    <property type="entry name" value="Chorismate synthase"/>
    <property type="match status" value="1"/>
</dbReference>
<dbReference type="Gene3D" id="3.60.150.10">
    <property type="entry name" value="Chorismate synthase AroC"/>
    <property type="match status" value="1"/>
</dbReference>
<dbReference type="HAMAP" id="MF_00300">
    <property type="entry name" value="Chorismate_synth"/>
    <property type="match status" value="1"/>
</dbReference>
<dbReference type="InterPro" id="IPR000453">
    <property type="entry name" value="Chorismate_synth"/>
</dbReference>
<dbReference type="InterPro" id="IPR035904">
    <property type="entry name" value="Chorismate_synth_AroC_sf"/>
</dbReference>
<dbReference type="InterPro" id="IPR020541">
    <property type="entry name" value="Chorismate_synthase_CS"/>
</dbReference>
<dbReference type="NCBIfam" id="TIGR00033">
    <property type="entry name" value="aroC"/>
    <property type="match status" value="1"/>
</dbReference>
<dbReference type="NCBIfam" id="NF003793">
    <property type="entry name" value="PRK05382.1"/>
    <property type="match status" value="1"/>
</dbReference>
<dbReference type="PANTHER" id="PTHR21085">
    <property type="entry name" value="CHORISMATE SYNTHASE"/>
    <property type="match status" value="1"/>
</dbReference>
<dbReference type="PANTHER" id="PTHR21085:SF0">
    <property type="entry name" value="CHORISMATE SYNTHASE"/>
    <property type="match status" value="1"/>
</dbReference>
<dbReference type="Pfam" id="PF01264">
    <property type="entry name" value="Chorismate_synt"/>
    <property type="match status" value="1"/>
</dbReference>
<dbReference type="PIRSF" id="PIRSF001456">
    <property type="entry name" value="Chorismate_synth"/>
    <property type="match status" value="1"/>
</dbReference>
<dbReference type="SUPFAM" id="SSF103263">
    <property type="entry name" value="Chorismate synthase, AroC"/>
    <property type="match status" value="1"/>
</dbReference>
<dbReference type="PROSITE" id="PS00787">
    <property type="entry name" value="CHORISMATE_SYNTHASE_1"/>
    <property type="match status" value="1"/>
</dbReference>
<dbReference type="PROSITE" id="PS00788">
    <property type="entry name" value="CHORISMATE_SYNTHASE_2"/>
    <property type="match status" value="1"/>
</dbReference>
<dbReference type="PROSITE" id="PS00789">
    <property type="entry name" value="CHORISMATE_SYNTHASE_3"/>
    <property type="match status" value="1"/>
</dbReference>
<accession>A6VMY7</accession>
<proteinExistence type="inferred from homology"/>
<organism>
    <name type="scientific">Actinobacillus succinogenes (strain ATCC 55618 / DSM 22257 / CCUG 43843 / 130Z)</name>
    <dbReference type="NCBI Taxonomy" id="339671"/>
    <lineage>
        <taxon>Bacteria</taxon>
        <taxon>Pseudomonadati</taxon>
        <taxon>Pseudomonadota</taxon>
        <taxon>Gammaproteobacteria</taxon>
        <taxon>Pasteurellales</taxon>
        <taxon>Pasteurellaceae</taxon>
        <taxon>Actinobacillus</taxon>
    </lineage>
</organism>
<keyword id="KW-0028">Amino-acid biosynthesis</keyword>
<keyword id="KW-0057">Aromatic amino acid biosynthesis</keyword>
<keyword id="KW-0274">FAD</keyword>
<keyword id="KW-0285">Flavoprotein</keyword>
<keyword id="KW-0288">FMN</keyword>
<keyword id="KW-0456">Lyase</keyword>
<keyword id="KW-0521">NADP</keyword>
<keyword id="KW-1185">Reference proteome</keyword>
<protein>
    <recommendedName>
        <fullName evidence="1">Chorismate synthase</fullName>
        <shortName evidence="1">CS</shortName>
        <ecNumber evidence="1">4.2.3.5</ecNumber>
    </recommendedName>
    <alternativeName>
        <fullName evidence="1">5-enolpyruvylshikimate-3-phosphate phospholyase</fullName>
    </alternativeName>
</protein>
<reference key="1">
    <citation type="journal article" date="2010" name="BMC Genomics">
        <title>A genomic perspective on the potential of Actinobacillus succinogenes for industrial succinate production.</title>
        <authorList>
            <person name="McKinlay J.B."/>
            <person name="Laivenieks M."/>
            <person name="Schindler B.D."/>
            <person name="McKinlay A.A."/>
            <person name="Siddaramappa S."/>
            <person name="Challacombe J.F."/>
            <person name="Lowry S.R."/>
            <person name="Clum A."/>
            <person name="Lapidus A.L."/>
            <person name="Burkhart K.B."/>
            <person name="Harkins V."/>
            <person name="Vieille C."/>
        </authorList>
    </citation>
    <scope>NUCLEOTIDE SEQUENCE [LARGE SCALE GENOMIC DNA]</scope>
    <source>
        <strain>ATCC 55618 / DSM 22257 / CCUG 43843 / 130Z</strain>
    </source>
</reference>
<name>AROC_ACTSZ</name>